<dbReference type="EMBL" id="M75136">
    <property type="protein sequence ID" value="AAA88187.1"/>
    <property type="molecule type" value="Genomic_DNA"/>
</dbReference>
<dbReference type="EMBL" id="M75136">
    <property type="protein sequence ID" value="AAA88109.1"/>
    <property type="molecule type" value="Genomic_DNA"/>
</dbReference>
<dbReference type="PIR" id="G36786">
    <property type="entry name" value="MMBEI1"/>
</dbReference>
<dbReference type="KEGG" id="vg:1488382"/>
<dbReference type="KEGG" id="vg:1488424"/>
<dbReference type="Proteomes" id="UP000007643">
    <property type="component" value="Segment"/>
</dbReference>
<dbReference type="GO" id="GO:0016020">
    <property type="term" value="C:membrane"/>
    <property type="evidence" value="ECO:0007669"/>
    <property type="project" value="UniProtKB-SubCell"/>
</dbReference>
<keyword id="KW-0472">Membrane</keyword>
<keyword id="KW-1185">Reference proteome</keyword>
<keyword id="KW-0812">Transmembrane</keyword>
<keyword id="KW-1133">Transmembrane helix</keyword>
<accession>Q00102</accession>
<feature type="chain" id="PRO_0000222092" description="Putative membrane protein ORF6">
    <location>
        <begin position="1"/>
        <end position="138"/>
    </location>
</feature>
<feature type="transmembrane region" description="Helical" evidence="1">
    <location>
        <begin position="4"/>
        <end position="20"/>
    </location>
</feature>
<feature type="transmembrane region" description="Helical" evidence="1">
    <location>
        <begin position="37"/>
        <end position="53"/>
    </location>
</feature>
<evidence type="ECO:0000255" key="1"/>
<evidence type="ECO:0000305" key="2"/>
<proteinExistence type="predicted"/>
<organism>
    <name type="scientific">Ictalurid herpesvirus 1 (strain Auburn)</name>
    <name type="common">IcHV-1</name>
    <name type="synonym">Channel catfish herpesvirus</name>
    <dbReference type="NCBI Taxonomy" id="766178"/>
    <lineage>
        <taxon>Viruses</taxon>
        <taxon>Duplodnaviria</taxon>
        <taxon>Heunggongvirae</taxon>
        <taxon>Peploviricota</taxon>
        <taxon>Herviviricetes</taxon>
        <taxon>Herpesvirales</taxon>
        <taxon>Alloherpesviridae</taxon>
        <taxon>Ictavirus</taxon>
        <taxon>Ictavirus ictaluridallo1</taxon>
        <taxon>Ictalurid herpesvirus 1</taxon>
    </lineage>
</organism>
<protein>
    <recommendedName>
        <fullName>Putative membrane protein ORF6</fullName>
    </recommendedName>
</protein>
<organismHost>
    <name type="scientific">Ictaluridae</name>
    <name type="common">bullhead catfishes</name>
    <dbReference type="NCBI Taxonomy" id="7996"/>
</organismHost>
<gene>
    <name type="primary">ORF6</name>
</gene>
<name>VG06_ICHVA</name>
<sequence length="138" mass="14648">MNSLTIIFLLSGLTAYHAVLADGTGSSESVTAGDSGVVVLVMIGALLTLLMTIPIIGLFGIYVRTRASIEEMRGILMQIHLRLITGDQRSNRGDVELGAGASLLTISSQPPSYAEALLMEPVEPQQQEGVPLEAEIRV</sequence>
<reference key="1">
    <citation type="journal article" date="1992" name="Virology">
        <title>Channel catfish virus: a new type of herpesvirus.</title>
        <authorList>
            <person name="Davison A.J."/>
        </authorList>
    </citation>
    <scope>NUCLEOTIDE SEQUENCE [LARGE SCALE GENOMIC DNA]</scope>
</reference>
<comment type="subcellular location">
    <subcellularLocation>
        <location evidence="2">Membrane</location>
        <topology evidence="2">Multi-pass membrane protein</topology>
    </subcellularLocation>
</comment>